<organism>
    <name type="scientific">Epstein-Barr virus (strain AG876)</name>
    <name type="common">HHV-4</name>
    <name type="synonym">Human herpesvirus 4</name>
    <dbReference type="NCBI Taxonomy" id="82830"/>
    <lineage>
        <taxon>Viruses</taxon>
        <taxon>Duplodnaviria</taxon>
        <taxon>Heunggongvirae</taxon>
        <taxon>Peploviricota</taxon>
        <taxon>Herviviricetes</taxon>
        <taxon>Herpesvirales</taxon>
        <taxon>Orthoherpesviridae</taxon>
        <taxon>Gammaherpesvirinae</taxon>
        <taxon>Lymphocryptovirus</taxon>
        <taxon>Lymphocryptovirus humangamma4</taxon>
        <taxon>Epstein-Barr virus (strain GD1)</taxon>
    </lineage>
</organism>
<feature type="chain" id="PRO_0000408271" description="Replication and transcription activator">
    <location>
        <begin position="1"/>
        <end position="605"/>
    </location>
</feature>
<feature type="region of interest" description="Disordered" evidence="2">
    <location>
        <begin position="307"/>
        <end position="381"/>
    </location>
</feature>
<feature type="region of interest" description="Disordered" evidence="2">
    <location>
        <begin position="447"/>
        <end position="509"/>
    </location>
</feature>
<feature type="compositionally biased region" description="Low complexity" evidence="2">
    <location>
        <begin position="321"/>
        <end position="338"/>
    </location>
</feature>
<feature type="compositionally biased region" description="Basic and acidic residues" evidence="2">
    <location>
        <begin position="341"/>
        <end position="353"/>
    </location>
</feature>
<feature type="compositionally biased region" description="Basic residues" evidence="2">
    <location>
        <begin position="355"/>
        <end position="364"/>
    </location>
</feature>
<organismHost>
    <name type="scientific">Homo sapiens</name>
    <name type="common">Human</name>
    <dbReference type="NCBI Taxonomy" id="9606"/>
</organismHost>
<reference key="1">
    <citation type="journal article" date="2006" name="Virology">
        <title>The genome of Epstein-Barr virus type 2 strain AG876.</title>
        <authorList>
            <person name="Dolan A."/>
            <person name="Addison C."/>
            <person name="Gatherer D."/>
            <person name="Davison A.J."/>
            <person name="McGeoch D.J."/>
        </authorList>
    </citation>
    <scope>NUCLEOTIDE SEQUENCE [LARGE SCALE GENOMIC DNA]</scope>
</reference>
<protein>
    <recommendedName>
        <fullName>Replication and transcription activator</fullName>
        <shortName>Rta</shortName>
    </recommendedName>
    <alternativeName>
        <fullName>Immediate-early protein Rta</fullName>
    </alternativeName>
    <alternativeName>
        <fullName>Protein R</fullName>
    </alternativeName>
</protein>
<comment type="function">
    <text evidence="1">Immediate-early transcription factor that controls the initiation of viral lytic gene expression and lytic reactivation from latency. Triggers lytic replication, and initiates a cellular senescence program in epithelial cells. Up-regulates human DCR3/TNFRSF6B by directly binding to its receptor. Globally induces a proteasome-dependent loss of SUMOylated proteins in the host cell and the loss of promeylocytic leukemia nuclear bodies. Improves the stability of the triplex capsid protein TRX1 by reducing the ubiquitination level of the latter. Mediates evasion of inflammasome activation and antiviral responses (T- and NK cell activation) during EBV early lytic infection.</text>
</comment>
<comment type="subunit">
    <text evidence="1">Interacts with human ATF7IP protein, leading to promote and regulate host genes in virus-infected cells. Interacts with RNA polymerase III complex; this interaction downregulates small RNA transcription and 5'-pppRNA production.</text>
</comment>
<comment type="subcellular location">
    <subcellularLocation>
        <location evidence="1">Host nucleus</location>
    </subcellularLocation>
    <subcellularLocation>
        <location evidence="1">Virion tegument</location>
    </subcellularLocation>
    <text evidence="1">Localizes to the host nucleus during the viral lytic induction.</text>
</comment>
<comment type="similarity">
    <text evidence="3">Belongs to the herpesviridae Rta family.</text>
</comment>
<keyword id="KW-0010">Activator</keyword>
<keyword id="KW-0238">DNA-binding</keyword>
<keyword id="KW-0244">Early protein</keyword>
<keyword id="KW-1048">Host nucleus</keyword>
<keyword id="KW-0945">Host-virus interaction</keyword>
<keyword id="KW-1185">Reference proteome</keyword>
<keyword id="KW-0804">Transcription</keyword>
<keyword id="KW-0805">Transcription regulation</keyword>
<keyword id="KW-1251">Viral latency</keyword>
<keyword id="KW-1272">Viral reactivation from latency</keyword>
<keyword id="KW-0946">Virion</keyword>
<keyword id="KW-0920">Virion tegument</keyword>
<dbReference type="EMBL" id="DQ279927">
    <property type="protein sequence ID" value="ABB89247.1"/>
    <property type="molecule type" value="Genomic_DNA"/>
</dbReference>
<dbReference type="RefSeq" id="YP_001129468.1">
    <property type="nucleotide sequence ID" value="NC_009334.1"/>
</dbReference>
<dbReference type="SMR" id="Q1HVG0"/>
<dbReference type="KEGG" id="vg:5176221"/>
<dbReference type="Proteomes" id="UP000007639">
    <property type="component" value="Genome"/>
</dbReference>
<dbReference type="GO" id="GO:0042025">
    <property type="term" value="C:host cell nucleus"/>
    <property type="evidence" value="ECO:0007669"/>
    <property type="project" value="UniProtKB-SubCell"/>
</dbReference>
<dbReference type="GO" id="GO:0019033">
    <property type="term" value="C:viral tegument"/>
    <property type="evidence" value="ECO:0007669"/>
    <property type="project" value="UniProtKB-SubCell"/>
</dbReference>
<dbReference type="GO" id="GO:0003677">
    <property type="term" value="F:DNA binding"/>
    <property type="evidence" value="ECO:0007669"/>
    <property type="project" value="UniProtKB-KW"/>
</dbReference>
<dbReference type="GO" id="GO:0006355">
    <property type="term" value="P:regulation of DNA-templated transcription"/>
    <property type="evidence" value="ECO:0007669"/>
    <property type="project" value="InterPro"/>
</dbReference>
<dbReference type="GO" id="GO:0019046">
    <property type="term" value="P:release from viral latency"/>
    <property type="evidence" value="ECO:0007669"/>
    <property type="project" value="UniProtKB-KW"/>
</dbReference>
<dbReference type="InterPro" id="IPR004998">
    <property type="entry name" value="Herpes_TAF50"/>
</dbReference>
<dbReference type="Pfam" id="PF03326">
    <property type="entry name" value="Herpes_TAF50"/>
    <property type="match status" value="1"/>
</dbReference>
<gene>
    <name type="ORF">BRLF1</name>
</gene>
<name>BRFL1_EBVA8</name>
<sequence>MRPKKDGLEDFLRLTPEIKKQLGSLVSDYCNVLNKEFTAGSVEITLRSYKICKAFINEAKAHGREWGGLMATLNICNFWAILRNNRVRRRAENAGNDACSIACPIVMRYVLDHLIVVTDRFFIQAPSNRVMIPATIGTAMYKLLKHSRVRAYTYSKVLGVDRAAIMASGKQVVEHLNRMEKEGLLSSKFKAFCKWVFTYPVLEEMFQTMVSSKTGHLTDDVKDVRALIKTLPRASYSSHAGQRSYVSGVLPACLLSTKSKAVETPILVSGADRMDEELMGNDGGASHTEARYSESGQFHAFTDELESLPSPTMPLKPGAQSADCGDSSSSSSDSGNSDTEQSEREEARAEAPRLRAPKSRRTSRPNRGQTPCPSNAEEPEQPWIAAVHQESDERPIFPHPSKPTFLPPVKRKKGLRDSREGMFLPKPEAGSAISDVFEGREVCQPKRIRPFHPPGSPWANRPLPASLAPTPTGPVHEPVGSLTPAPVPRPLDPAPAVTPEASHLLEDPDEETSQAVKALREMADTVIPQKEEAAICGQMDLNHPPPRGHLDELTTTLESMTEDLNLDSPLTPELNEILDTFLNDECLLHAMHISTGLSIFDTSLF</sequence>
<proteinExistence type="inferred from homology"/>
<evidence type="ECO:0000250" key="1">
    <source>
        <dbReference type="UniProtKB" id="P03209"/>
    </source>
</evidence>
<evidence type="ECO:0000256" key="2">
    <source>
        <dbReference type="SAM" id="MobiDB-lite"/>
    </source>
</evidence>
<evidence type="ECO:0000305" key="3"/>
<accession>Q1HVG0</accession>